<organism>
    <name type="scientific">Neisseria meningitidis serogroup A / serotype 4A (strain DSM 15465 / Z2491)</name>
    <dbReference type="NCBI Taxonomy" id="122587"/>
    <lineage>
        <taxon>Bacteria</taxon>
        <taxon>Pseudomonadati</taxon>
        <taxon>Pseudomonadota</taxon>
        <taxon>Betaproteobacteria</taxon>
        <taxon>Neisseriales</taxon>
        <taxon>Neisseriaceae</taxon>
        <taxon>Neisseria</taxon>
    </lineage>
</organism>
<sequence>MLQPTRLKYRKQQKGRNTGIATRGNKVSFGEFGLKAVGRGRLTARQIEAARRAMTRHIKRGGRIWIRVFPDKPITEKPIQVRMGGGKGNVEYYIAEIKPGKVLYEMDGVPEELAREAFELAAAKLPIPTTFVVRQVGQ</sequence>
<evidence type="ECO:0000255" key="1">
    <source>
        <dbReference type="HAMAP-Rule" id="MF_01342"/>
    </source>
</evidence>
<evidence type="ECO:0000305" key="2"/>
<proteinExistence type="inferred from homology"/>
<keyword id="KW-0687">Ribonucleoprotein</keyword>
<keyword id="KW-0689">Ribosomal protein</keyword>
<keyword id="KW-0694">RNA-binding</keyword>
<keyword id="KW-0699">rRNA-binding</keyword>
<keyword id="KW-0820">tRNA-binding</keyword>
<feature type="chain" id="PRO_0000062152" description="Large ribosomal subunit protein uL16">
    <location>
        <begin position="1"/>
        <end position="138"/>
    </location>
</feature>
<dbReference type="EMBL" id="AL157959">
    <property type="protein sequence ID" value="CAM07440.1"/>
    <property type="molecule type" value="Genomic_DNA"/>
</dbReference>
<dbReference type="PIR" id="G81231">
    <property type="entry name" value="G81231"/>
</dbReference>
<dbReference type="RefSeq" id="WP_002215430.1">
    <property type="nucleotide sequence ID" value="NC_003116.1"/>
</dbReference>
<dbReference type="SMR" id="Q9JR26"/>
<dbReference type="EnsemblBacteria" id="CAM07440">
    <property type="protein sequence ID" value="CAM07440"/>
    <property type="gene ID" value="NMA0122"/>
</dbReference>
<dbReference type="GeneID" id="93387224"/>
<dbReference type="KEGG" id="nma:NMA0122"/>
<dbReference type="HOGENOM" id="CLU_078858_2_1_4"/>
<dbReference type="Proteomes" id="UP000000626">
    <property type="component" value="Chromosome"/>
</dbReference>
<dbReference type="GO" id="GO:0022625">
    <property type="term" value="C:cytosolic large ribosomal subunit"/>
    <property type="evidence" value="ECO:0007669"/>
    <property type="project" value="TreeGrafter"/>
</dbReference>
<dbReference type="GO" id="GO:0019843">
    <property type="term" value="F:rRNA binding"/>
    <property type="evidence" value="ECO:0007669"/>
    <property type="project" value="UniProtKB-UniRule"/>
</dbReference>
<dbReference type="GO" id="GO:0003735">
    <property type="term" value="F:structural constituent of ribosome"/>
    <property type="evidence" value="ECO:0007669"/>
    <property type="project" value="InterPro"/>
</dbReference>
<dbReference type="GO" id="GO:0000049">
    <property type="term" value="F:tRNA binding"/>
    <property type="evidence" value="ECO:0007669"/>
    <property type="project" value="UniProtKB-KW"/>
</dbReference>
<dbReference type="GO" id="GO:0006412">
    <property type="term" value="P:translation"/>
    <property type="evidence" value="ECO:0007669"/>
    <property type="project" value="UniProtKB-UniRule"/>
</dbReference>
<dbReference type="CDD" id="cd01433">
    <property type="entry name" value="Ribosomal_L16_L10e"/>
    <property type="match status" value="1"/>
</dbReference>
<dbReference type="FunFam" id="3.90.1170.10:FF:000001">
    <property type="entry name" value="50S ribosomal protein L16"/>
    <property type="match status" value="1"/>
</dbReference>
<dbReference type="Gene3D" id="3.90.1170.10">
    <property type="entry name" value="Ribosomal protein L10e/L16"/>
    <property type="match status" value="1"/>
</dbReference>
<dbReference type="HAMAP" id="MF_01342">
    <property type="entry name" value="Ribosomal_uL16"/>
    <property type="match status" value="1"/>
</dbReference>
<dbReference type="InterPro" id="IPR047873">
    <property type="entry name" value="Ribosomal_uL16"/>
</dbReference>
<dbReference type="InterPro" id="IPR000114">
    <property type="entry name" value="Ribosomal_uL16_bact-type"/>
</dbReference>
<dbReference type="InterPro" id="IPR020798">
    <property type="entry name" value="Ribosomal_uL16_CS"/>
</dbReference>
<dbReference type="InterPro" id="IPR016180">
    <property type="entry name" value="Ribosomal_uL16_dom"/>
</dbReference>
<dbReference type="InterPro" id="IPR036920">
    <property type="entry name" value="Ribosomal_uL16_sf"/>
</dbReference>
<dbReference type="NCBIfam" id="TIGR01164">
    <property type="entry name" value="rplP_bact"/>
    <property type="match status" value="1"/>
</dbReference>
<dbReference type="PANTHER" id="PTHR12220">
    <property type="entry name" value="50S/60S RIBOSOMAL PROTEIN L16"/>
    <property type="match status" value="1"/>
</dbReference>
<dbReference type="PANTHER" id="PTHR12220:SF13">
    <property type="entry name" value="LARGE RIBOSOMAL SUBUNIT PROTEIN UL16M"/>
    <property type="match status" value="1"/>
</dbReference>
<dbReference type="Pfam" id="PF00252">
    <property type="entry name" value="Ribosomal_L16"/>
    <property type="match status" value="1"/>
</dbReference>
<dbReference type="PRINTS" id="PR00060">
    <property type="entry name" value="RIBOSOMALL16"/>
</dbReference>
<dbReference type="SUPFAM" id="SSF54686">
    <property type="entry name" value="Ribosomal protein L16p/L10e"/>
    <property type="match status" value="1"/>
</dbReference>
<dbReference type="PROSITE" id="PS00586">
    <property type="entry name" value="RIBOSOMAL_L16_1"/>
    <property type="match status" value="1"/>
</dbReference>
<protein>
    <recommendedName>
        <fullName evidence="1">Large ribosomal subunit protein uL16</fullName>
    </recommendedName>
    <alternativeName>
        <fullName evidence="2">50S ribosomal protein L16</fullName>
    </alternativeName>
</protein>
<reference key="1">
    <citation type="journal article" date="2000" name="Nature">
        <title>Complete DNA sequence of a serogroup A strain of Neisseria meningitidis Z2491.</title>
        <authorList>
            <person name="Parkhill J."/>
            <person name="Achtman M."/>
            <person name="James K.D."/>
            <person name="Bentley S.D."/>
            <person name="Churcher C.M."/>
            <person name="Klee S.R."/>
            <person name="Morelli G."/>
            <person name="Basham D."/>
            <person name="Brown D."/>
            <person name="Chillingworth T."/>
            <person name="Davies R.M."/>
            <person name="Davis P."/>
            <person name="Devlin K."/>
            <person name="Feltwell T."/>
            <person name="Hamlin N."/>
            <person name="Holroyd S."/>
            <person name="Jagels K."/>
            <person name="Leather S."/>
            <person name="Moule S."/>
            <person name="Mungall K.L."/>
            <person name="Quail M.A."/>
            <person name="Rajandream M.A."/>
            <person name="Rutherford K.M."/>
            <person name="Simmonds M."/>
            <person name="Skelton J."/>
            <person name="Whitehead S."/>
            <person name="Spratt B.G."/>
            <person name="Barrell B.G."/>
        </authorList>
    </citation>
    <scope>NUCLEOTIDE SEQUENCE [LARGE SCALE GENOMIC DNA]</scope>
    <source>
        <strain>DSM 15465 / Z2491</strain>
    </source>
</reference>
<gene>
    <name evidence="1" type="primary">rplP</name>
    <name type="ordered locus">NMA0122</name>
</gene>
<accession>Q9JR26</accession>
<accession>A1INY3</accession>
<comment type="function">
    <text evidence="1">Binds 23S rRNA and is also seen to make contacts with the A and possibly P site tRNAs.</text>
</comment>
<comment type="subunit">
    <text evidence="1">Part of the 50S ribosomal subunit.</text>
</comment>
<comment type="similarity">
    <text evidence="1">Belongs to the universal ribosomal protein uL16 family.</text>
</comment>
<name>RL16_NEIMA</name>